<reference key="1">
    <citation type="journal article" date="2009" name="BMC Genomics">
        <title>Metabolic analysis of the soil microbe Dechloromonas aromatica str. RCB: indications of a surprisingly complex life-style and cryptic anaerobic pathways for aromatic degradation.</title>
        <authorList>
            <person name="Salinero K.K."/>
            <person name="Keller K."/>
            <person name="Feil W.S."/>
            <person name="Feil H."/>
            <person name="Trong S."/>
            <person name="Di Bartolo G."/>
            <person name="Lapidus A."/>
        </authorList>
    </citation>
    <scope>NUCLEOTIDE SEQUENCE [LARGE SCALE GENOMIC DNA]</scope>
    <source>
        <strain>RCB</strain>
    </source>
</reference>
<accession>Q47A87</accession>
<comment type="function">
    <text evidence="1">Catalytic subunit of the periplasmic nitrate reductase complex NapAB. Receives electrons from NapB and catalyzes the reduction of nitrate to nitrite.</text>
</comment>
<comment type="catalytic activity">
    <reaction evidence="1">
        <text>2 Fe(II)-[cytochrome] + nitrate + 2 H(+) = 2 Fe(III)-[cytochrome] + nitrite + H2O</text>
        <dbReference type="Rhea" id="RHEA:12909"/>
        <dbReference type="Rhea" id="RHEA-COMP:11777"/>
        <dbReference type="Rhea" id="RHEA-COMP:11778"/>
        <dbReference type="ChEBI" id="CHEBI:15377"/>
        <dbReference type="ChEBI" id="CHEBI:15378"/>
        <dbReference type="ChEBI" id="CHEBI:16301"/>
        <dbReference type="ChEBI" id="CHEBI:17632"/>
        <dbReference type="ChEBI" id="CHEBI:29033"/>
        <dbReference type="ChEBI" id="CHEBI:29034"/>
        <dbReference type="EC" id="1.9.6.1"/>
    </reaction>
</comment>
<comment type="cofactor">
    <cofactor evidence="1">
        <name>[4Fe-4S] cluster</name>
        <dbReference type="ChEBI" id="CHEBI:49883"/>
    </cofactor>
    <text evidence="1">Binds 1 [4Fe-4S] cluster.</text>
</comment>
<comment type="cofactor">
    <cofactor evidence="1">
        <name>Mo-bis(molybdopterin guanine dinucleotide)</name>
        <dbReference type="ChEBI" id="CHEBI:60539"/>
    </cofactor>
    <text evidence="1">Binds 1 molybdenum-bis(molybdopterin guanine dinucleotide) (Mo-bis-MGD) cofactor per subunit.</text>
</comment>
<comment type="subunit">
    <text evidence="1">Component of the periplasmic nitrate reductase NapAB complex composed of NapA and NapB.</text>
</comment>
<comment type="subcellular location">
    <subcellularLocation>
        <location evidence="1">Periplasm</location>
    </subcellularLocation>
</comment>
<comment type="PTM">
    <text evidence="1">Predicted to be exported by the Tat system. The position of the signal peptide cleavage has not been experimentally proven.</text>
</comment>
<comment type="similarity">
    <text evidence="1">Belongs to the prokaryotic molybdopterin-containing oxidoreductase family. NasA/NapA/NarB subfamily.</text>
</comment>
<dbReference type="EC" id="1.9.6.1" evidence="1"/>
<dbReference type="EMBL" id="CP000089">
    <property type="protein sequence ID" value="AAZ48244.1"/>
    <property type="molecule type" value="Genomic_DNA"/>
</dbReference>
<dbReference type="SMR" id="Q47A87"/>
<dbReference type="STRING" id="159087.Daro_3515"/>
<dbReference type="KEGG" id="dar:Daro_3515"/>
<dbReference type="eggNOG" id="COG0243">
    <property type="taxonomic scope" value="Bacteria"/>
</dbReference>
<dbReference type="HOGENOM" id="CLU_000422_13_4_4"/>
<dbReference type="OrthoDB" id="7376058at2"/>
<dbReference type="GO" id="GO:0016020">
    <property type="term" value="C:membrane"/>
    <property type="evidence" value="ECO:0007669"/>
    <property type="project" value="TreeGrafter"/>
</dbReference>
<dbReference type="GO" id="GO:0009325">
    <property type="term" value="C:nitrate reductase complex"/>
    <property type="evidence" value="ECO:0007669"/>
    <property type="project" value="TreeGrafter"/>
</dbReference>
<dbReference type="GO" id="GO:0042597">
    <property type="term" value="C:periplasmic space"/>
    <property type="evidence" value="ECO:0007669"/>
    <property type="project" value="UniProtKB-SubCell"/>
</dbReference>
<dbReference type="GO" id="GO:0051539">
    <property type="term" value="F:4 iron, 4 sulfur cluster binding"/>
    <property type="evidence" value="ECO:0007669"/>
    <property type="project" value="UniProtKB-KW"/>
</dbReference>
<dbReference type="GO" id="GO:0009055">
    <property type="term" value="F:electron transfer activity"/>
    <property type="evidence" value="ECO:0007669"/>
    <property type="project" value="UniProtKB-UniRule"/>
</dbReference>
<dbReference type="GO" id="GO:0005506">
    <property type="term" value="F:iron ion binding"/>
    <property type="evidence" value="ECO:0007669"/>
    <property type="project" value="UniProtKB-UniRule"/>
</dbReference>
<dbReference type="GO" id="GO:0030151">
    <property type="term" value="F:molybdenum ion binding"/>
    <property type="evidence" value="ECO:0007669"/>
    <property type="project" value="InterPro"/>
</dbReference>
<dbReference type="GO" id="GO:0043546">
    <property type="term" value="F:molybdopterin cofactor binding"/>
    <property type="evidence" value="ECO:0007669"/>
    <property type="project" value="InterPro"/>
</dbReference>
<dbReference type="GO" id="GO:0050140">
    <property type="term" value="F:nitrate reductase (cytochrome) activity"/>
    <property type="evidence" value="ECO:0007669"/>
    <property type="project" value="UniProtKB-EC"/>
</dbReference>
<dbReference type="GO" id="GO:0045333">
    <property type="term" value="P:cellular respiration"/>
    <property type="evidence" value="ECO:0007669"/>
    <property type="project" value="UniProtKB-ARBA"/>
</dbReference>
<dbReference type="GO" id="GO:0006777">
    <property type="term" value="P:Mo-molybdopterin cofactor biosynthetic process"/>
    <property type="evidence" value="ECO:0007669"/>
    <property type="project" value="UniProtKB-UniRule"/>
</dbReference>
<dbReference type="GO" id="GO:0042128">
    <property type="term" value="P:nitrate assimilation"/>
    <property type="evidence" value="ECO:0007669"/>
    <property type="project" value="UniProtKB-UniRule"/>
</dbReference>
<dbReference type="CDD" id="cd02791">
    <property type="entry name" value="MopB_CT_Nitrate-R-NapA-like"/>
    <property type="match status" value="1"/>
</dbReference>
<dbReference type="CDD" id="cd02754">
    <property type="entry name" value="MopB_Nitrate-R-NapA-like"/>
    <property type="match status" value="1"/>
</dbReference>
<dbReference type="FunFam" id="2.40.40.20:FF:000005">
    <property type="entry name" value="Periplasmic nitrate reductase"/>
    <property type="match status" value="1"/>
</dbReference>
<dbReference type="Gene3D" id="2.40.40.20">
    <property type="match status" value="1"/>
</dbReference>
<dbReference type="Gene3D" id="3.30.200.210">
    <property type="match status" value="1"/>
</dbReference>
<dbReference type="Gene3D" id="3.40.50.740">
    <property type="match status" value="1"/>
</dbReference>
<dbReference type="Gene3D" id="3.40.228.10">
    <property type="entry name" value="Dimethylsulfoxide Reductase, domain 2"/>
    <property type="match status" value="1"/>
</dbReference>
<dbReference type="HAMAP" id="MF_01630">
    <property type="entry name" value="Nitrate_reduct_NapA"/>
    <property type="match status" value="1"/>
</dbReference>
<dbReference type="InterPro" id="IPR009010">
    <property type="entry name" value="Asp_de-COase-like_dom_sf"/>
</dbReference>
<dbReference type="InterPro" id="IPR041957">
    <property type="entry name" value="CT_Nitrate-R-NapA-like"/>
</dbReference>
<dbReference type="InterPro" id="IPR006657">
    <property type="entry name" value="MoPterin_dinucl-bd_dom"/>
</dbReference>
<dbReference type="InterPro" id="IPR006656">
    <property type="entry name" value="Mopterin_OxRdtase"/>
</dbReference>
<dbReference type="InterPro" id="IPR006963">
    <property type="entry name" value="Mopterin_OxRdtase_4Fe-4S_dom"/>
</dbReference>
<dbReference type="InterPro" id="IPR027467">
    <property type="entry name" value="MopterinOxRdtase_cofactor_BS"/>
</dbReference>
<dbReference type="InterPro" id="IPR010051">
    <property type="entry name" value="Periplasm_NO3_reductase_lsu"/>
</dbReference>
<dbReference type="InterPro" id="IPR050123">
    <property type="entry name" value="Prok_molybdopt-oxidoreductase"/>
</dbReference>
<dbReference type="InterPro" id="IPR006311">
    <property type="entry name" value="TAT_signal"/>
</dbReference>
<dbReference type="NCBIfam" id="TIGR01706">
    <property type="entry name" value="NAPA"/>
    <property type="match status" value="1"/>
</dbReference>
<dbReference type="NCBIfam" id="NF010055">
    <property type="entry name" value="PRK13532.1"/>
    <property type="match status" value="1"/>
</dbReference>
<dbReference type="PANTHER" id="PTHR43105:SF11">
    <property type="entry name" value="PERIPLASMIC NITRATE REDUCTASE"/>
    <property type="match status" value="1"/>
</dbReference>
<dbReference type="PANTHER" id="PTHR43105">
    <property type="entry name" value="RESPIRATORY NITRATE REDUCTASE"/>
    <property type="match status" value="1"/>
</dbReference>
<dbReference type="Pfam" id="PF04879">
    <property type="entry name" value="Molybdop_Fe4S4"/>
    <property type="match status" value="1"/>
</dbReference>
<dbReference type="Pfam" id="PF00384">
    <property type="entry name" value="Molybdopterin"/>
    <property type="match status" value="1"/>
</dbReference>
<dbReference type="Pfam" id="PF01568">
    <property type="entry name" value="Molydop_binding"/>
    <property type="match status" value="1"/>
</dbReference>
<dbReference type="SMART" id="SM00926">
    <property type="entry name" value="Molybdop_Fe4S4"/>
    <property type="match status" value="1"/>
</dbReference>
<dbReference type="SUPFAM" id="SSF50692">
    <property type="entry name" value="ADC-like"/>
    <property type="match status" value="1"/>
</dbReference>
<dbReference type="SUPFAM" id="SSF53706">
    <property type="entry name" value="Formate dehydrogenase/DMSO reductase, domains 1-3"/>
    <property type="match status" value="1"/>
</dbReference>
<dbReference type="PROSITE" id="PS51669">
    <property type="entry name" value="4FE4S_MOW_BIS_MGD"/>
    <property type="match status" value="1"/>
</dbReference>
<dbReference type="PROSITE" id="PS00551">
    <property type="entry name" value="MOLYBDOPTERIN_PROK_1"/>
    <property type="match status" value="1"/>
</dbReference>
<dbReference type="PROSITE" id="PS51318">
    <property type="entry name" value="TAT"/>
    <property type="match status" value="1"/>
</dbReference>
<feature type="signal peptide" description="Tat-type signal" evidence="1">
    <location>
        <begin position="1"/>
        <end position="31"/>
    </location>
</feature>
<feature type="chain" id="PRO_0000045983" description="Periplasmic nitrate reductase" evidence="1">
    <location>
        <begin position="32"/>
        <end position="837"/>
    </location>
</feature>
<feature type="domain" description="4Fe-4S Mo/W bis-MGD-type" evidence="1">
    <location>
        <begin position="37"/>
        <end position="93"/>
    </location>
</feature>
<feature type="region of interest" description="Disordered" evidence="2">
    <location>
        <begin position="308"/>
        <end position="329"/>
    </location>
</feature>
<feature type="compositionally biased region" description="Basic and acidic residues" evidence="2">
    <location>
        <begin position="319"/>
        <end position="329"/>
    </location>
</feature>
<feature type="binding site" evidence="1">
    <location>
        <position position="44"/>
    </location>
    <ligand>
        <name>[4Fe-4S] cluster</name>
        <dbReference type="ChEBI" id="CHEBI:49883"/>
    </ligand>
</feature>
<feature type="binding site" evidence="1">
    <location>
        <position position="47"/>
    </location>
    <ligand>
        <name>[4Fe-4S] cluster</name>
        <dbReference type="ChEBI" id="CHEBI:49883"/>
    </ligand>
</feature>
<feature type="binding site" evidence="1">
    <location>
        <position position="51"/>
    </location>
    <ligand>
        <name>[4Fe-4S] cluster</name>
        <dbReference type="ChEBI" id="CHEBI:49883"/>
    </ligand>
</feature>
<feature type="binding site" evidence="1">
    <location>
        <position position="79"/>
    </location>
    <ligand>
        <name>[4Fe-4S] cluster</name>
        <dbReference type="ChEBI" id="CHEBI:49883"/>
    </ligand>
</feature>
<feature type="binding site" evidence="1">
    <location>
        <position position="81"/>
    </location>
    <ligand>
        <name>Mo-bis(molybdopterin guanine dinucleotide)</name>
        <dbReference type="ChEBI" id="CHEBI:60539"/>
    </ligand>
</feature>
<feature type="binding site" evidence="1">
    <location>
        <position position="148"/>
    </location>
    <ligand>
        <name>Mo-bis(molybdopterin guanine dinucleotide)</name>
        <dbReference type="ChEBI" id="CHEBI:60539"/>
    </ligand>
</feature>
<feature type="binding site" evidence="1">
    <location>
        <position position="173"/>
    </location>
    <ligand>
        <name>Mo-bis(molybdopterin guanine dinucleotide)</name>
        <dbReference type="ChEBI" id="CHEBI:60539"/>
    </ligand>
</feature>
<feature type="binding site" evidence="1">
    <location>
        <position position="177"/>
    </location>
    <ligand>
        <name>Mo-bis(molybdopterin guanine dinucleotide)</name>
        <dbReference type="ChEBI" id="CHEBI:60539"/>
    </ligand>
</feature>
<feature type="binding site" evidence="1">
    <location>
        <begin position="210"/>
        <end position="217"/>
    </location>
    <ligand>
        <name>Mo-bis(molybdopterin guanine dinucleotide)</name>
        <dbReference type="ChEBI" id="CHEBI:60539"/>
    </ligand>
</feature>
<feature type="binding site" evidence="1">
    <location>
        <begin position="241"/>
        <end position="245"/>
    </location>
    <ligand>
        <name>Mo-bis(molybdopterin guanine dinucleotide)</name>
        <dbReference type="ChEBI" id="CHEBI:60539"/>
    </ligand>
</feature>
<feature type="binding site" evidence="1">
    <location>
        <begin position="260"/>
        <end position="262"/>
    </location>
    <ligand>
        <name>Mo-bis(molybdopterin guanine dinucleotide)</name>
        <dbReference type="ChEBI" id="CHEBI:60539"/>
    </ligand>
</feature>
<feature type="binding site" evidence="1">
    <location>
        <position position="381"/>
    </location>
    <ligand>
        <name>Mo-bis(molybdopterin guanine dinucleotide)</name>
        <dbReference type="ChEBI" id="CHEBI:60539"/>
    </ligand>
</feature>
<feature type="binding site" evidence="1">
    <location>
        <position position="385"/>
    </location>
    <ligand>
        <name>Mo-bis(molybdopterin guanine dinucleotide)</name>
        <dbReference type="ChEBI" id="CHEBI:60539"/>
    </ligand>
</feature>
<feature type="binding site" evidence="1">
    <location>
        <position position="491"/>
    </location>
    <ligand>
        <name>Mo-bis(molybdopterin guanine dinucleotide)</name>
        <dbReference type="ChEBI" id="CHEBI:60539"/>
    </ligand>
</feature>
<feature type="binding site" evidence="1">
    <location>
        <begin position="517"/>
        <end position="518"/>
    </location>
    <ligand>
        <name>Mo-bis(molybdopterin guanine dinucleotide)</name>
        <dbReference type="ChEBI" id="CHEBI:60539"/>
    </ligand>
</feature>
<feature type="binding site" evidence="1">
    <location>
        <position position="540"/>
    </location>
    <ligand>
        <name>Mo-bis(molybdopterin guanine dinucleotide)</name>
        <dbReference type="ChEBI" id="CHEBI:60539"/>
    </ligand>
</feature>
<feature type="binding site" evidence="1">
    <location>
        <position position="567"/>
    </location>
    <ligand>
        <name>Mo-bis(molybdopterin guanine dinucleotide)</name>
        <dbReference type="ChEBI" id="CHEBI:60539"/>
    </ligand>
</feature>
<feature type="binding site" evidence="1">
    <location>
        <begin position="727"/>
        <end position="736"/>
    </location>
    <ligand>
        <name>Mo-bis(molybdopterin guanine dinucleotide)</name>
        <dbReference type="ChEBI" id="CHEBI:60539"/>
    </ligand>
</feature>
<feature type="binding site" evidence="1">
    <location>
        <position position="803"/>
    </location>
    <ligand>
        <name>substrate</name>
    </ligand>
</feature>
<feature type="binding site" evidence="1">
    <location>
        <position position="811"/>
    </location>
    <ligand>
        <name>Mo-bis(molybdopterin guanine dinucleotide)</name>
        <dbReference type="ChEBI" id="CHEBI:60539"/>
    </ligand>
</feature>
<feature type="binding site" evidence="1">
    <location>
        <position position="828"/>
    </location>
    <ligand>
        <name>Mo-bis(molybdopterin guanine dinucleotide)</name>
        <dbReference type="ChEBI" id="CHEBI:60539"/>
    </ligand>
</feature>
<keyword id="KW-0004">4Fe-4S</keyword>
<keyword id="KW-0249">Electron transport</keyword>
<keyword id="KW-0408">Iron</keyword>
<keyword id="KW-0411">Iron-sulfur</keyword>
<keyword id="KW-0479">Metal-binding</keyword>
<keyword id="KW-0500">Molybdenum</keyword>
<keyword id="KW-0534">Nitrate assimilation</keyword>
<keyword id="KW-0560">Oxidoreductase</keyword>
<keyword id="KW-0574">Periplasm</keyword>
<keyword id="KW-0732">Signal</keyword>
<keyword id="KW-0813">Transport</keyword>
<proteinExistence type="inferred from homology"/>
<sequence length="837" mass="93395">MKLNRRDFIKANAAAAAISAAGLSVPGAAVAQGKDEIRWDKAACRFCGTGCGVLVGTQDGRVVATQGDPDAPVNRGLNCIKGYFLSKIMYGADRLKTPMLRMKDGKYDKNGEFTPISWTKAFDIMEEKAKATMKAKGPNGLAMFGSGQWTIWEGYAASKLMKAGFRTNNLDPNARHCMASAVAGFMRTFGIDEPMGCYDDIEHADAFVLWGSNMAEMHPILWTRITDRKLSNKGVKVAVLSTFEHRSYELADIPMIFTPQTDLAILNYIANYIIQNGKVNQAFVDKNVNFKKSATDIGYGLRPTHALEKNATSNGYPDADGKPKGDTGKSDPITFDEFKKFVSEYTVEKVSKLSGVAEKDLKALAELYADPKVKVISFWTMGFNQHTRGTWANNLCYNIHLLTGKISEPGNSPFSLTGQPSACGTAREVGTFSHRLPADMVVTNPEHRKHTEELWGLPEGTIPDKVGYHAVAMARALKDGKVNFYWQQCNNNMQAGPNINEELYPGWRKPENFIVVSDPYPTVSAMAADLILPTAMWVEKEGAYGNAERRTQFWRQQVKAPGEARSDLWQLMEFSKRFKVEEVWPAELVAKAPKLKGKTLFDVLYANGVVNKYKLNETAAGFDNDDSKLIGFYIQKGLFEEYASFGRGHGHDLAPFDSYHQARGLRWPVVGGKETLWRFREGYDPYVKKGEGVKFYGHKDGKAVIFALPYQPPAESPDKEFDMWLSTGRVLEHWHTGTMTRRVPELYKAFPDAVVFMHPDDAKARGLQRGMEVKVASRRGEIQLRVETRGRNKPPRGLVFIPFFDAGRLVNKLTLDATCPISKETDYKKCAVKVTKV</sequence>
<organism>
    <name type="scientific">Dechloromonas aromatica (strain RCB)</name>
    <dbReference type="NCBI Taxonomy" id="159087"/>
    <lineage>
        <taxon>Bacteria</taxon>
        <taxon>Pseudomonadati</taxon>
        <taxon>Pseudomonadota</taxon>
        <taxon>Betaproteobacteria</taxon>
        <taxon>Rhodocyclales</taxon>
        <taxon>Azonexaceae</taxon>
        <taxon>Dechloromonas</taxon>
    </lineage>
</organism>
<name>NAPA_DECAR</name>
<protein>
    <recommendedName>
        <fullName evidence="1">Periplasmic nitrate reductase</fullName>
        <ecNumber evidence="1">1.9.6.1</ecNumber>
    </recommendedName>
</protein>
<evidence type="ECO:0000255" key="1">
    <source>
        <dbReference type="HAMAP-Rule" id="MF_01630"/>
    </source>
</evidence>
<evidence type="ECO:0000256" key="2">
    <source>
        <dbReference type="SAM" id="MobiDB-lite"/>
    </source>
</evidence>
<gene>
    <name evidence="1" type="primary">napA</name>
    <name type="ordered locus">Daro_3515</name>
</gene>